<protein>
    <recommendedName>
        <fullName>Acidic phospholipase A2 5</fullName>
        <shortName>svPLA2</shortName>
        <ecNumber>3.1.1.4</ecNumber>
    </recommendedName>
    <alternativeName>
        <fullName>Phosphatidylcholine 2-acylhydrolase</fullName>
    </alternativeName>
</protein>
<reference key="1">
    <citation type="submission" date="2002-08" db="EMBL/GenBank/DDBJ databases">
        <title>Molecular cloning of phospholipase A2 from the venom glands of Echis carpet vipers.</title>
        <authorList>
            <person name="Harrison R.A."/>
            <person name="Bharati K."/>
            <person name="Hasson S."/>
        </authorList>
    </citation>
    <scope>NUCLEOTIDE SEQUENCE [MRNA]</scope>
    <source>
        <tissue>Venom gland</tissue>
    </source>
</reference>
<organism>
    <name type="scientific">Echis pyramidum leakeyi</name>
    <name type="common">Leakey's carpet viper</name>
    <name type="synonym">Echis carinatus leakeyi</name>
    <dbReference type="NCBI Taxonomy" id="38415"/>
    <lineage>
        <taxon>Eukaryota</taxon>
        <taxon>Metazoa</taxon>
        <taxon>Chordata</taxon>
        <taxon>Craniata</taxon>
        <taxon>Vertebrata</taxon>
        <taxon>Euteleostomi</taxon>
        <taxon>Lepidosauria</taxon>
        <taxon>Squamata</taxon>
        <taxon>Bifurcata</taxon>
        <taxon>Unidentata</taxon>
        <taxon>Episquamata</taxon>
        <taxon>Toxicofera</taxon>
        <taxon>Serpentes</taxon>
        <taxon>Colubroidea</taxon>
        <taxon>Viperidae</taxon>
        <taxon>Viperinae</taxon>
        <taxon>Echis</taxon>
    </lineage>
</organism>
<evidence type="ECO:0000250" key="1"/>
<evidence type="ECO:0000255" key="2">
    <source>
        <dbReference type="PROSITE-ProRule" id="PRU10035"/>
    </source>
</evidence>
<evidence type="ECO:0000255" key="3">
    <source>
        <dbReference type="PROSITE-ProRule" id="PRU10036"/>
    </source>
</evidence>
<evidence type="ECO:0000305" key="4"/>
<feature type="signal peptide" evidence="1">
    <location>
        <begin position="1"/>
        <end position="16"/>
    </location>
</feature>
<feature type="chain" id="PRO_0000022872" description="Acidic phospholipase A2 5">
    <location>
        <begin position="17"/>
        <end position="139"/>
    </location>
</feature>
<feature type="active site" evidence="1">
    <location>
        <position position="63"/>
    </location>
</feature>
<feature type="active site" evidence="1">
    <location>
        <position position="105"/>
    </location>
</feature>
<feature type="binding site" evidence="1">
    <location>
        <position position="43"/>
    </location>
    <ligand>
        <name>Ca(2+)</name>
        <dbReference type="ChEBI" id="CHEBI:29108"/>
    </ligand>
</feature>
<feature type="binding site" evidence="1">
    <location>
        <position position="45"/>
    </location>
    <ligand>
        <name>Ca(2+)</name>
        <dbReference type="ChEBI" id="CHEBI:29108"/>
    </ligand>
</feature>
<feature type="binding site" evidence="1">
    <location>
        <position position="47"/>
    </location>
    <ligand>
        <name>Ca(2+)</name>
        <dbReference type="ChEBI" id="CHEBI:29108"/>
    </ligand>
</feature>
<feature type="binding site" evidence="1">
    <location>
        <position position="64"/>
    </location>
    <ligand>
        <name>Ca(2+)</name>
        <dbReference type="ChEBI" id="CHEBI:29108"/>
    </ligand>
</feature>
<feature type="disulfide bond" evidence="1">
    <location>
        <begin position="42"/>
        <end position="131"/>
    </location>
</feature>
<feature type="disulfide bond" evidence="1">
    <location>
        <begin position="44"/>
        <end position="60"/>
    </location>
</feature>
<feature type="disulfide bond" evidence="1">
    <location>
        <begin position="59"/>
        <end position="111"/>
    </location>
</feature>
<feature type="disulfide bond" evidence="1">
    <location>
        <begin position="65"/>
        <end position="139"/>
    </location>
</feature>
<feature type="disulfide bond" evidence="1">
    <location>
        <begin position="66"/>
        <end position="104"/>
    </location>
</feature>
<feature type="disulfide bond" evidence="1">
    <location>
        <begin position="73"/>
        <end position="97"/>
    </location>
</feature>
<feature type="disulfide bond" evidence="1">
    <location>
        <begin position="91"/>
        <end position="102"/>
    </location>
</feature>
<sequence length="139" mass="15945">MRTLWIVAVWLMGVEGNLYQFGKMIKNKTGKPAMFSYSAYGCYCGWGGQGKPQDPSDRCCFMHDCCYTRVNNCSPKMTLYSYRFENGDIICGDNDPCRKAVCECDREAAICLGENVNTYDEKYRFYSSSYCTEEESEKC</sequence>
<comment type="function">
    <text evidence="1">PLA2 catalyzes the calcium-dependent hydrolysis of the 2-acyl groups in 3-sn-phosphoglycerides.</text>
</comment>
<comment type="catalytic activity">
    <reaction evidence="2 3">
        <text>a 1,2-diacyl-sn-glycero-3-phosphocholine + H2O = a 1-acyl-sn-glycero-3-phosphocholine + a fatty acid + H(+)</text>
        <dbReference type="Rhea" id="RHEA:15801"/>
        <dbReference type="ChEBI" id="CHEBI:15377"/>
        <dbReference type="ChEBI" id="CHEBI:15378"/>
        <dbReference type="ChEBI" id="CHEBI:28868"/>
        <dbReference type="ChEBI" id="CHEBI:57643"/>
        <dbReference type="ChEBI" id="CHEBI:58168"/>
        <dbReference type="EC" id="3.1.1.4"/>
    </reaction>
</comment>
<comment type="cofactor">
    <cofactor evidence="1">
        <name>Ca(2+)</name>
        <dbReference type="ChEBI" id="CHEBI:29108"/>
    </cofactor>
    <text evidence="1">Binds 1 Ca(2+) ion.</text>
</comment>
<comment type="subcellular location">
    <subcellularLocation>
        <location evidence="1">Secreted</location>
    </subcellularLocation>
</comment>
<comment type="tissue specificity">
    <text>Expressed by the venom gland.</text>
</comment>
<comment type="similarity">
    <text evidence="4">Belongs to the phospholipase A2 family. Group II subfamily. D49 sub-subfamily.</text>
</comment>
<dbReference type="EC" id="3.1.1.4"/>
<dbReference type="EMBL" id="AF539920">
    <property type="protein sequence ID" value="AAN77203.1"/>
    <property type="molecule type" value="mRNA"/>
</dbReference>
<dbReference type="SMR" id="P59172"/>
<dbReference type="GO" id="GO:0005576">
    <property type="term" value="C:extracellular region"/>
    <property type="evidence" value="ECO:0007669"/>
    <property type="project" value="UniProtKB-SubCell"/>
</dbReference>
<dbReference type="GO" id="GO:0005509">
    <property type="term" value="F:calcium ion binding"/>
    <property type="evidence" value="ECO:0007669"/>
    <property type="project" value="InterPro"/>
</dbReference>
<dbReference type="GO" id="GO:0047498">
    <property type="term" value="F:calcium-dependent phospholipase A2 activity"/>
    <property type="evidence" value="ECO:0007669"/>
    <property type="project" value="TreeGrafter"/>
</dbReference>
<dbReference type="GO" id="GO:0005543">
    <property type="term" value="F:phospholipid binding"/>
    <property type="evidence" value="ECO:0007669"/>
    <property type="project" value="TreeGrafter"/>
</dbReference>
<dbReference type="GO" id="GO:0050482">
    <property type="term" value="P:arachidonate secretion"/>
    <property type="evidence" value="ECO:0007669"/>
    <property type="project" value="InterPro"/>
</dbReference>
<dbReference type="GO" id="GO:0016042">
    <property type="term" value="P:lipid catabolic process"/>
    <property type="evidence" value="ECO:0007669"/>
    <property type="project" value="UniProtKB-KW"/>
</dbReference>
<dbReference type="GO" id="GO:0042130">
    <property type="term" value="P:negative regulation of T cell proliferation"/>
    <property type="evidence" value="ECO:0007669"/>
    <property type="project" value="TreeGrafter"/>
</dbReference>
<dbReference type="GO" id="GO:0006644">
    <property type="term" value="P:phospholipid metabolic process"/>
    <property type="evidence" value="ECO:0007669"/>
    <property type="project" value="InterPro"/>
</dbReference>
<dbReference type="CDD" id="cd00125">
    <property type="entry name" value="PLA2c"/>
    <property type="match status" value="1"/>
</dbReference>
<dbReference type="FunFam" id="1.20.90.10:FF:000001">
    <property type="entry name" value="Basic phospholipase A2 homolog"/>
    <property type="match status" value="1"/>
</dbReference>
<dbReference type="Gene3D" id="1.20.90.10">
    <property type="entry name" value="Phospholipase A2 domain"/>
    <property type="match status" value="1"/>
</dbReference>
<dbReference type="InterPro" id="IPR001211">
    <property type="entry name" value="PLipase_A2"/>
</dbReference>
<dbReference type="InterPro" id="IPR033112">
    <property type="entry name" value="PLipase_A2_Asp_AS"/>
</dbReference>
<dbReference type="InterPro" id="IPR016090">
    <property type="entry name" value="PLipase_A2_dom"/>
</dbReference>
<dbReference type="InterPro" id="IPR036444">
    <property type="entry name" value="PLipase_A2_dom_sf"/>
</dbReference>
<dbReference type="InterPro" id="IPR033113">
    <property type="entry name" value="PLipase_A2_His_AS"/>
</dbReference>
<dbReference type="PANTHER" id="PTHR11716">
    <property type="entry name" value="PHOSPHOLIPASE A2 FAMILY MEMBER"/>
    <property type="match status" value="1"/>
</dbReference>
<dbReference type="PANTHER" id="PTHR11716:SF9">
    <property type="entry name" value="PHOSPHOLIPASE A2, MEMBRANE ASSOCIATED"/>
    <property type="match status" value="1"/>
</dbReference>
<dbReference type="Pfam" id="PF00068">
    <property type="entry name" value="Phospholip_A2_1"/>
    <property type="match status" value="1"/>
</dbReference>
<dbReference type="PRINTS" id="PR00389">
    <property type="entry name" value="PHPHLIPASEA2"/>
</dbReference>
<dbReference type="SMART" id="SM00085">
    <property type="entry name" value="PA2c"/>
    <property type="match status" value="1"/>
</dbReference>
<dbReference type="SUPFAM" id="SSF48619">
    <property type="entry name" value="Phospholipase A2, PLA2"/>
    <property type="match status" value="1"/>
</dbReference>
<dbReference type="PROSITE" id="PS00119">
    <property type="entry name" value="PA2_ASP"/>
    <property type="match status" value="1"/>
</dbReference>
<dbReference type="PROSITE" id="PS00118">
    <property type="entry name" value="PA2_HIS"/>
    <property type="match status" value="1"/>
</dbReference>
<keyword id="KW-0106">Calcium</keyword>
<keyword id="KW-1015">Disulfide bond</keyword>
<keyword id="KW-0378">Hydrolase</keyword>
<keyword id="KW-0442">Lipid degradation</keyword>
<keyword id="KW-0443">Lipid metabolism</keyword>
<keyword id="KW-0479">Metal-binding</keyword>
<keyword id="KW-0964">Secreted</keyword>
<keyword id="KW-0732">Signal</keyword>
<name>PA2A5_ECHPL</name>
<proteinExistence type="evidence at transcript level"/>
<accession>P59172</accession>